<proteinExistence type="predicted"/>
<name>045L_FRG3G</name>
<gene>
    <name type="ORF">FV3-045L</name>
</gene>
<accession>Q6GZT1</accession>
<organism>
    <name type="scientific">Frog virus 3 (isolate Goorha)</name>
    <name type="common">FV-3</name>
    <dbReference type="NCBI Taxonomy" id="654924"/>
    <lineage>
        <taxon>Viruses</taxon>
        <taxon>Varidnaviria</taxon>
        <taxon>Bamfordvirae</taxon>
        <taxon>Nucleocytoviricota</taxon>
        <taxon>Megaviricetes</taxon>
        <taxon>Pimascovirales</taxon>
        <taxon>Iridoviridae</taxon>
        <taxon>Alphairidovirinae</taxon>
        <taxon>Ranavirus</taxon>
        <taxon>Frog virus 3</taxon>
    </lineage>
</organism>
<keyword id="KW-1185">Reference proteome</keyword>
<reference key="1">
    <citation type="journal article" date="2004" name="Virology">
        <title>Comparative genomic analyses of frog virus 3, type species of the genus Ranavirus (family Iridoviridae).</title>
        <authorList>
            <person name="Tan W.G."/>
            <person name="Barkman T.J."/>
            <person name="Gregory Chinchar V."/>
            <person name="Essani K."/>
        </authorList>
    </citation>
    <scope>NUCLEOTIDE SEQUENCE [LARGE SCALE GENOMIC DNA]</scope>
</reference>
<protein>
    <recommendedName>
        <fullName>Uncharacterized protein 045L</fullName>
    </recommendedName>
</protein>
<feature type="chain" id="PRO_0000410558" description="Uncharacterized protein 045L">
    <location>
        <begin position="1"/>
        <end position="136"/>
    </location>
</feature>
<dbReference type="EMBL" id="AY548484">
    <property type="protein sequence ID" value="AAT09704.1"/>
    <property type="molecule type" value="Genomic_DNA"/>
</dbReference>
<dbReference type="RefSeq" id="YP_031623.1">
    <property type="nucleotide sequence ID" value="NC_005946.1"/>
</dbReference>
<dbReference type="KEGG" id="vg:2947824"/>
<dbReference type="Proteomes" id="UP000008770">
    <property type="component" value="Segment"/>
</dbReference>
<dbReference type="InterPro" id="IPR043907">
    <property type="entry name" value="DUF5770"/>
</dbReference>
<dbReference type="Pfam" id="PF19074">
    <property type="entry name" value="DUF5770"/>
    <property type="match status" value="1"/>
</dbReference>
<organismHost>
    <name type="scientific">Dryophytes versicolor</name>
    <name type="common">chameleon treefrog</name>
    <dbReference type="NCBI Taxonomy" id="30343"/>
</organismHost>
<organismHost>
    <name type="scientific">Lithobates pipiens</name>
    <name type="common">Northern leopard frog</name>
    <name type="synonym">Rana pipiens</name>
    <dbReference type="NCBI Taxonomy" id="8404"/>
</organismHost>
<organismHost>
    <name type="scientific">Lithobates sylvaticus</name>
    <name type="common">Wood frog</name>
    <name type="synonym">Rana sylvatica</name>
    <dbReference type="NCBI Taxonomy" id="45438"/>
</organismHost>
<organismHost>
    <name type="scientific">Notophthalmus viridescens</name>
    <name type="common">Eastern newt</name>
    <name type="synonym">Triturus viridescens</name>
    <dbReference type="NCBI Taxonomy" id="8316"/>
</organismHost>
<sequence length="136" mass="15551">MDDVEYRTEFSARERAGGDIEEGLELFGPATFKGMEGDPVQRFYNGIESAGRNLIRDGHIKLNKQEQTRLLSSVLRITYPNYKNPMGTVLGFYVTDGGRGPIDKGRLSHVQSFMEEVTDMDLRDLIRYCRLWLALK</sequence>